<gene>
    <name evidence="1" type="primary">mnmE</name>
    <name evidence="1" type="synonym">trmE</name>
    <name type="ordered locus">CYA_2126</name>
</gene>
<sequence>MDLTAPLADTIAAIATAVVPEQGSIGIVRLSGSRALAIAQAIFTPARRNAVWESHRLLYGWIHDEKGRRLDEALAVWMQAPRSYTREDVVELHCHGGIMVVQATLQQCLRQGARLAQPGEFSLRAFLNGRIDLTQAESVADLVAARSPQAAQMALAGLQGKLGQSIRALRQELLGLLAEIEARLDFEEDLPPLDVPAWQARLQDIQAQMQALLATAERGQLLRTGVKVAIVGRPNVGKSSLLNAWSGQDRAIVTDLPGTTRDVVESQLVVRGIPVQLLDTAGIRATDDPVERLGVERSQRLAQTADVLVLVIDAQAGWTEADAAIYASIRHRPLILVINKTDLAPADKIRLPPEIAYRVPAVAAQGQGIPELEEALEQLVTQGRPQPNLEVSLNQRQAAALRQAQASLEQVVQAMQAQLPLDFWTIDLRGALHALGQITGEEISEAVLDQIFSRFCIGK</sequence>
<reference key="1">
    <citation type="journal article" date="2007" name="ISME J.">
        <title>Population level functional diversity in a microbial community revealed by comparative genomic and metagenomic analyses.</title>
        <authorList>
            <person name="Bhaya D."/>
            <person name="Grossman A.R."/>
            <person name="Steunou A.-S."/>
            <person name="Khuri N."/>
            <person name="Cohan F.M."/>
            <person name="Hamamura N."/>
            <person name="Melendrez M.C."/>
            <person name="Bateson M.M."/>
            <person name="Ward D.M."/>
            <person name="Heidelberg J.F."/>
        </authorList>
    </citation>
    <scope>NUCLEOTIDE SEQUENCE [LARGE SCALE GENOMIC DNA]</scope>
    <source>
        <strain>JA-3-3Ab</strain>
    </source>
</reference>
<protein>
    <recommendedName>
        <fullName evidence="1">tRNA modification GTPase MnmE</fullName>
        <ecNumber evidence="1">3.6.-.-</ecNumber>
    </recommendedName>
</protein>
<accession>Q2JSU8</accession>
<comment type="function">
    <text evidence="1">Exhibits a very high intrinsic GTPase hydrolysis rate. Involved in the addition of a carboxymethylaminomethyl (cmnm) group at the wobble position (U34) of certain tRNAs, forming tRNA-cmnm(5)s(2)U34.</text>
</comment>
<comment type="cofactor">
    <cofactor evidence="1">
        <name>K(+)</name>
        <dbReference type="ChEBI" id="CHEBI:29103"/>
    </cofactor>
    <text evidence="1">Binds 1 potassium ion per subunit.</text>
</comment>
<comment type="subunit">
    <text evidence="1">Homodimer. Heterotetramer of two MnmE and two MnmG subunits.</text>
</comment>
<comment type="subcellular location">
    <subcellularLocation>
        <location evidence="1">Cytoplasm</location>
    </subcellularLocation>
</comment>
<comment type="similarity">
    <text evidence="1">Belongs to the TRAFAC class TrmE-Era-EngA-EngB-Septin-like GTPase superfamily. TrmE GTPase family.</text>
</comment>
<organism>
    <name type="scientific">Synechococcus sp. (strain JA-3-3Ab)</name>
    <name type="common">Cyanobacteria bacterium Yellowstone A-Prime</name>
    <dbReference type="NCBI Taxonomy" id="321327"/>
    <lineage>
        <taxon>Bacteria</taxon>
        <taxon>Bacillati</taxon>
        <taxon>Cyanobacteriota</taxon>
        <taxon>Cyanophyceae</taxon>
        <taxon>Synechococcales</taxon>
        <taxon>Synechococcaceae</taxon>
        <taxon>Synechococcus</taxon>
    </lineage>
</organism>
<evidence type="ECO:0000255" key="1">
    <source>
        <dbReference type="HAMAP-Rule" id="MF_00379"/>
    </source>
</evidence>
<keyword id="KW-0963">Cytoplasm</keyword>
<keyword id="KW-0342">GTP-binding</keyword>
<keyword id="KW-0378">Hydrolase</keyword>
<keyword id="KW-0460">Magnesium</keyword>
<keyword id="KW-0479">Metal-binding</keyword>
<keyword id="KW-0547">Nucleotide-binding</keyword>
<keyword id="KW-0630">Potassium</keyword>
<keyword id="KW-0819">tRNA processing</keyword>
<feature type="chain" id="PRO_0000345919" description="tRNA modification GTPase MnmE">
    <location>
        <begin position="1"/>
        <end position="459"/>
    </location>
</feature>
<feature type="domain" description="TrmE-type G">
    <location>
        <begin position="225"/>
        <end position="381"/>
    </location>
</feature>
<feature type="binding site" evidence="1">
    <location>
        <position position="29"/>
    </location>
    <ligand>
        <name>(6S)-5-formyl-5,6,7,8-tetrahydrofolate</name>
        <dbReference type="ChEBI" id="CHEBI:57457"/>
    </ligand>
</feature>
<feature type="binding site" evidence="1">
    <location>
        <position position="91"/>
    </location>
    <ligand>
        <name>(6S)-5-formyl-5,6,7,8-tetrahydrofolate</name>
        <dbReference type="ChEBI" id="CHEBI:57457"/>
    </ligand>
</feature>
<feature type="binding site" evidence="1">
    <location>
        <position position="130"/>
    </location>
    <ligand>
        <name>(6S)-5-formyl-5,6,7,8-tetrahydrofolate</name>
        <dbReference type="ChEBI" id="CHEBI:57457"/>
    </ligand>
</feature>
<feature type="binding site" evidence="1">
    <location>
        <begin position="235"/>
        <end position="240"/>
    </location>
    <ligand>
        <name>GTP</name>
        <dbReference type="ChEBI" id="CHEBI:37565"/>
    </ligand>
</feature>
<feature type="binding site" evidence="1">
    <location>
        <position position="235"/>
    </location>
    <ligand>
        <name>K(+)</name>
        <dbReference type="ChEBI" id="CHEBI:29103"/>
    </ligand>
</feature>
<feature type="binding site" evidence="1">
    <location>
        <position position="239"/>
    </location>
    <ligand>
        <name>Mg(2+)</name>
        <dbReference type="ChEBI" id="CHEBI:18420"/>
    </ligand>
</feature>
<feature type="binding site" evidence="1">
    <location>
        <begin position="254"/>
        <end position="260"/>
    </location>
    <ligand>
        <name>GTP</name>
        <dbReference type="ChEBI" id="CHEBI:37565"/>
    </ligand>
</feature>
<feature type="binding site" evidence="1">
    <location>
        <position position="254"/>
    </location>
    <ligand>
        <name>K(+)</name>
        <dbReference type="ChEBI" id="CHEBI:29103"/>
    </ligand>
</feature>
<feature type="binding site" evidence="1">
    <location>
        <position position="256"/>
    </location>
    <ligand>
        <name>K(+)</name>
        <dbReference type="ChEBI" id="CHEBI:29103"/>
    </ligand>
</feature>
<feature type="binding site" evidence="1">
    <location>
        <position position="259"/>
    </location>
    <ligand>
        <name>K(+)</name>
        <dbReference type="ChEBI" id="CHEBI:29103"/>
    </ligand>
</feature>
<feature type="binding site" evidence="1">
    <location>
        <position position="260"/>
    </location>
    <ligand>
        <name>Mg(2+)</name>
        <dbReference type="ChEBI" id="CHEBI:18420"/>
    </ligand>
</feature>
<feature type="binding site" evidence="1">
    <location>
        <begin position="279"/>
        <end position="282"/>
    </location>
    <ligand>
        <name>GTP</name>
        <dbReference type="ChEBI" id="CHEBI:37565"/>
    </ligand>
</feature>
<feature type="binding site" evidence="1">
    <location>
        <position position="459"/>
    </location>
    <ligand>
        <name>(6S)-5-formyl-5,6,7,8-tetrahydrofolate</name>
        <dbReference type="ChEBI" id="CHEBI:57457"/>
    </ligand>
</feature>
<proteinExistence type="inferred from homology"/>
<name>MNME_SYNJA</name>
<dbReference type="EC" id="3.6.-.-" evidence="1"/>
<dbReference type="EMBL" id="CP000239">
    <property type="protein sequence ID" value="ABD00266.1"/>
    <property type="molecule type" value="Genomic_DNA"/>
</dbReference>
<dbReference type="RefSeq" id="WP_011430940.1">
    <property type="nucleotide sequence ID" value="NC_007775.1"/>
</dbReference>
<dbReference type="SMR" id="Q2JSU8"/>
<dbReference type="STRING" id="321327.CYA_2126"/>
<dbReference type="KEGG" id="cya:CYA_2126"/>
<dbReference type="eggNOG" id="COG0486">
    <property type="taxonomic scope" value="Bacteria"/>
</dbReference>
<dbReference type="HOGENOM" id="CLU_019624_4_1_3"/>
<dbReference type="OrthoDB" id="9805918at2"/>
<dbReference type="Proteomes" id="UP000008818">
    <property type="component" value="Chromosome"/>
</dbReference>
<dbReference type="GO" id="GO:0005829">
    <property type="term" value="C:cytosol"/>
    <property type="evidence" value="ECO:0007669"/>
    <property type="project" value="TreeGrafter"/>
</dbReference>
<dbReference type="GO" id="GO:0005525">
    <property type="term" value="F:GTP binding"/>
    <property type="evidence" value="ECO:0007669"/>
    <property type="project" value="UniProtKB-UniRule"/>
</dbReference>
<dbReference type="GO" id="GO:0003924">
    <property type="term" value="F:GTPase activity"/>
    <property type="evidence" value="ECO:0007669"/>
    <property type="project" value="UniProtKB-UniRule"/>
</dbReference>
<dbReference type="GO" id="GO:0046872">
    <property type="term" value="F:metal ion binding"/>
    <property type="evidence" value="ECO:0007669"/>
    <property type="project" value="UniProtKB-KW"/>
</dbReference>
<dbReference type="GO" id="GO:0030488">
    <property type="term" value="P:tRNA methylation"/>
    <property type="evidence" value="ECO:0007669"/>
    <property type="project" value="TreeGrafter"/>
</dbReference>
<dbReference type="GO" id="GO:0002098">
    <property type="term" value="P:tRNA wobble uridine modification"/>
    <property type="evidence" value="ECO:0007669"/>
    <property type="project" value="TreeGrafter"/>
</dbReference>
<dbReference type="CDD" id="cd04164">
    <property type="entry name" value="trmE"/>
    <property type="match status" value="1"/>
</dbReference>
<dbReference type="CDD" id="cd14858">
    <property type="entry name" value="TrmE_N"/>
    <property type="match status" value="1"/>
</dbReference>
<dbReference type="FunFam" id="3.30.1360.120:FF:000003">
    <property type="entry name" value="tRNA modification GTPase MnmE"/>
    <property type="match status" value="1"/>
</dbReference>
<dbReference type="FunFam" id="3.40.50.300:FF:000494">
    <property type="entry name" value="tRNA modification GTPase MnmE"/>
    <property type="match status" value="1"/>
</dbReference>
<dbReference type="Gene3D" id="3.40.50.300">
    <property type="entry name" value="P-loop containing nucleotide triphosphate hydrolases"/>
    <property type="match status" value="1"/>
</dbReference>
<dbReference type="Gene3D" id="3.30.1360.120">
    <property type="entry name" value="Probable tRNA modification gtpase trme, domain 1"/>
    <property type="match status" value="1"/>
</dbReference>
<dbReference type="Gene3D" id="1.20.120.430">
    <property type="entry name" value="tRNA modification GTPase MnmE domain 2"/>
    <property type="match status" value="1"/>
</dbReference>
<dbReference type="HAMAP" id="MF_00379">
    <property type="entry name" value="GTPase_MnmE"/>
    <property type="match status" value="1"/>
</dbReference>
<dbReference type="InterPro" id="IPR031168">
    <property type="entry name" value="G_TrmE"/>
</dbReference>
<dbReference type="InterPro" id="IPR006073">
    <property type="entry name" value="GTP-bd"/>
</dbReference>
<dbReference type="InterPro" id="IPR018948">
    <property type="entry name" value="GTP-bd_TrmE_N"/>
</dbReference>
<dbReference type="InterPro" id="IPR004520">
    <property type="entry name" value="GTPase_MnmE"/>
</dbReference>
<dbReference type="InterPro" id="IPR027368">
    <property type="entry name" value="MnmE_dom2"/>
</dbReference>
<dbReference type="InterPro" id="IPR025867">
    <property type="entry name" value="MnmE_helical"/>
</dbReference>
<dbReference type="InterPro" id="IPR027417">
    <property type="entry name" value="P-loop_NTPase"/>
</dbReference>
<dbReference type="InterPro" id="IPR005225">
    <property type="entry name" value="Small_GTP-bd"/>
</dbReference>
<dbReference type="InterPro" id="IPR027266">
    <property type="entry name" value="TrmE/GcvT_dom1"/>
</dbReference>
<dbReference type="NCBIfam" id="TIGR00450">
    <property type="entry name" value="mnmE_trmE_thdF"/>
    <property type="match status" value="1"/>
</dbReference>
<dbReference type="NCBIfam" id="NF003661">
    <property type="entry name" value="PRK05291.1-3"/>
    <property type="match status" value="1"/>
</dbReference>
<dbReference type="NCBIfam" id="TIGR00231">
    <property type="entry name" value="small_GTP"/>
    <property type="match status" value="1"/>
</dbReference>
<dbReference type="PANTHER" id="PTHR42714">
    <property type="entry name" value="TRNA MODIFICATION GTPASE GTPBP3"/>
    <property type="match status" value="1"/>
</dbReference>
<dbReference type="PANTHER" id="PTHR42714:SF2">
    <property type="entry name" value="TRNA MODIFICATION GTPASE GTPBP3, MITOCHONDRIAL"/>
    <property type="match status" value="1"/>
</dbReference>
<dbReference type="Pfam" id="PF01926">
    <property type="entry name" value="MMR_HSR1"/>
    <property type="match status" value="1"/>
</dbReference>
<dbReference type="Pfam" id="PF12631">
    <property type="entry name" value="MnmE_helical"/>
    <property type="match status" value="1"/>
</dbReference>
<dbReference type="Pfam" id="PF10396">
    <property type="entry name" value="TrmE_N"/>
    <property type="match status" value="1"/>
</dbReference>
<dbReference type="PRINTS" id="PR00326">
    <property type="entry name" value="GTP1OBG"/>
</dbReference>
<dbReference type="SUPFAM" id="SSF52540">
    <property type="entry name" value="P-loop containing nucleoside triphosphate hydrolases"/>
    <property type="match status" value="1"/>
</dbReference>
<dbReference type="SUPFAM" id="SSF116878">
    <property type="entry name" value="TrmE connector domain"/>
    <property type="match status" value="1"/>
</dbReference>
<dbReference type="PROSITE" id="PS51709">
    <property type="entry name" value="G_TRME"/>
    <property type="match status" value="1"/>
</dbReference>